<keyword id="KW-0963">Cytoplasm</keyword>
<keyword id="KW-0274">FAD</keyword>
<keyword id="KW-0285">Flavoprotein</keyword>
<keyword id="KW-0489">Methyltransferase</keyword>
<keyword id="KW-0511">Multifunctional enzyme</keyword>
<keyword id="KW-0560">Oxidoreductase</keyword>
<keyword id="KW-1185">Reference proteome</keyword>
<keyword id="KW-0949">S-adenosyl-L-methionine</keyword>
<keyword id="KW-0808">Transferase</keyword>
<keyword id="KW-0819">tRNA processing</keyword>
<dbReference type="EC" id="2.1.1.61" evidence="1"/>
<dbReference type="EC" id="1.5.-.-" evidence="1"/>
<dbReference type="EMBL" id="AE005673">
    <property type="protein sequence ID" value="AAK22733.1"/>
    <property type="status" value="ALT_INIT"/>
    <property type="molecule type" value="Genomic_DNA"/>
</dbReference>
<dbReference type="PIR" id="A87342">
    <property type="entry name" value="A87342"/>
</dbReference>
<dbReference type="RefSeq" id="NP_419565.1">
    <property type="nucleotide sequence ID" value="NC_002696.2"/>
</dbReference>
<dbReference type="RefSeq" id="WP_024265612.1">
    <property type="nucleotide sequence ID" value="NC_002696.2"/>
</dbReference>
<dbReference type="SMR" id="Q9AA58"/>
<dbReference type="STRING" id="190650.CC_0748"/>
<dbReference type="EnsemblBacteria" id="AAK22733">
    <property type="protein sequence ID" value="AAK22733"/>
    <property type="gene ID" value="CC_0748"/>
</dbReference>
<dbReference type="KEGG" id="ccr:CC_0748"/>
<dbReference type="PATRIC" id="fig|190650.5.peg.758"/>
<dbReference type="eggNOG" id="COG0665">
    <property type="taxonomic scope" value="Bacteria"/>
</dbReference>
<dbReference type="eggNOG" id="COG4121">
    <property type="taxonomic scope" value="Bacteria"/>
</dbReference>
<dbReference type="HOGENOM" id="CLU_022427_1_0_5"/>
<dbReference type="Proteomes" id="UP000001816">
    <property type="component" value="Chromosome"/>
</dbReference>
<dbReference type="GO" id="GO:0005737">
    <property type="term" value="C:cytoplasm"/>
    <property type="evidence" value="ECO:0007669"/>
    <property type="project" value="UniProtKB-SubCell"/>
</dbReference>
<dbReference type="GO" id="GO:0050660">
    <property type="term" value="F:flavin adenine dinucleotide binding"/>
    <property type="evidence" value="ECO:0007669"/>
    <property type="project" value="UniProtKB-UniRule"/>
</dbReference>
<dbReference type="GO" id="GO:0016645">
    <property type="term" value="F:oxidoreductase activity, acting on the CH-NH group of donors"/>
    <property type="evidence" value="ECO:0007669"/>
    <property type="project" value="InterPro"/>
</dbReference>
<dbReference type="GO" id="GO:0004808">
    <property type="term" value="F:tRNA (5-methylaminomethyl-2-thiouridylate)(34)-methyltransferase activity"/>
    <property type="evidence" value="ECO:0007669"/>
    <property type="project" value="UniProtKB-EC"/>
</dbReference>
<dbReference type="GO" id="GO:0032259">
    <property type="term" value="P:methylation"/>
    <property type="evidence" value="ECO:0007669"/>
    <property type="project" value="UniProtKB-KW"/>
</dbReference>
<dbReference type="GO" id="GO:0002097">
    <property type="term" value="P:tRNA wobble base modification"/>
    <property type="evidence" value="ECO:0007669"/>
    <property type="project" value="UniProtKB-UniRule"/>
</dbReference>
<dbReference type="Gene3D" id="3.30.9.10">
    <property type="entry name" value="D-Amino Acid Oxidase, subunit A, domain 2"/>
    <property type="match status" value="1"/>
</dbReference>
<dbReference type="Gene3D" id="3.50.50.60">
    <property type="entry name" value="FAD/NAD(P)-binding domain"/>
    <property type="match status" value="1"/>
</dbReference>
<dbReference type="Gene3D" id="3.40.50.150">
    <property type="entry name" value="Vaccinia Virus protein VP39"/>
    <property type="match status" value="1"/>
</dbReference>
<dbReference type="HAMAP" id="MF_01102">
    <property type="entry name" value="MnmC"/>
    <property type="match status" value="1"/>
</dbReference>
<dbReference type="InterPro" id="IPR006076">
    <property type="entry name" value="FAD-dep_OxRdtase"/>
</dbReference>
<dbReference type="InterPro" id="IPR036188">
    <property type="entry name" value="FAD/NAD-bd_sf"/>
</dbReference>
<dbReference type="InterPro" id="IPR008471">
    <property type="entry name" value="MnmC-like_methylTransf"/>
</dbReference>
<dbReference type="InterPro" id="IPR029063">
    <property type="entry name" value="SAM-dependent_MTases_sf"/>
</dbReference>
<dbReference type="InterPro" id="IPR023032">
    <property type="entry name" value="tRNA_MAMT_biosynth_bifunc_MnmC"/>
</dbReference>
<dbReference type="InterPro" id="IPR047785">
    <property type="entry name" value="tRNA_MNMC2"/>
</dbReference>
<dbReference type="NCBIfam" id="NF033855">
    <property type="entry name" value="tRNA_MNMC2"/>
    <property type="match status" value="1"/>
</dbReference>
<dbReference type="PANTHER" id="PTHR13847">
    <property type="entry name" value="SARCOSINE DEHYDROGENASE-RELATED"/>
    <property type="match status" value="1"/>
</dbReference>
<dbReference type="PANTHER" id="PTHR13847:SF283">
    <property type="entry name" value="TRNA 5-METHYLAMINOMETHYL-2-THIOURIDINE BIOSYNTHESIS BIFUNCTIONAL PROTEIN MNMC"/>
    <property type="match status" value="1"/>
</dbReference>
<dbReference type="Pfam" id="PF01266">
    <property type="entry name" value="DAO"/>
    <property type="match status" value="1"/>
</dbReference>
<dbReference type="Pfam" id="PF05430">
    <property type="entry name" value="Methyltransf_30"/>
    <property type="match status" value="1"/>
</dbReference>
<dbReference type="SUPFAM" id="SSF54373">
    <property type="entry name" value="FAD-linked reductases, C-terminal domain"/>
    <property type="match status" value="1"/>
</dbReference>
<dbReference type="SUPFAM" id="SSF51905">
    <property type="entry name" value="FAD/NAD(P)-binding domain"/>
    <property type="match status" value="1"/>
</dbReference>
<dbReference type="SUPFAM" id="SSF53335">
    <property type="entry name" value="S-adenosyl-L-methionine-dependent methyltransferases"/>
    <property type="match status" value="1"/>
</dbReference>
<proteinExistence type="inferred from homology"/>
<feature type="chain" id="PRO_0000095010" description="tRNA 5-methylaminomethyl-2-thiouridine biosynthesis bifunctional protein MnmC">
    <location>
        <begin position="1"/>
        <end position="591"/>
    </location>
</feature>
<feature type="region of interest" description="tRNA (mnm(5)s(2)U34)-methyltransferase">
    <location>
        <begin position="1"/>
        <end position="232"/>
    </location>
</feature>
<feature type="region of interest" description="FAD-dependent cmnm(5)s(2)U34 oxidoreductase">
    <location>
        <begin position="247"/>
        <end position="591"/>
    </location>
</feature>
<reference key="1">
    <citation type="journal article" date="2001" name="Proc. Natl. Acad. Sci. U.S.A.">
        <title>Complete genome sequence of Caulobacter crescentus.</title>
        <authorList>
            <person name="Nierman W.C."/>
            <person name="Feldblyum T.V."/>
            <person name="Laub M.T."/>
            <person name="Paulsen I.T."/>
            <person name="Nelson K.E."/>
            <person name="Eisen J.A."/>
            <person name="Heidelberg J.F."/>
            <person name="Alley M.R.K."/>
            <person name="Ohta N."/>
            <person name="Maddock J.R."/>
            <person name="Potocka I."/>
            <person name="Nelson W.C."/>
            <person name="Newton A."/>
            <person name="Stephens C."/>
            <person name="Phadke N.D."/>
            <person name="Ely B."/>
            <person name="DeBoy R.T."/>
            <person name="Dodson R.J."/>
            <person name="Durkin A.S."/>
            <person name="Gwinn M.L."/>
            <person name="Haft D.H."/>
            <person name="Kolonay J.F."/>
            <person name="Smit J."/>
            <person name="Craven M.B."/>
            <person name="Khouri H.M."/>
            <person name="Shetty J."/>
            <person name="Berry K.J."/>
            <person name="Utterback T.R."/>
            <person name="Tran K."/>
            <person name="Wolf A.M."/>
            <person name="Vamathevan J.J."/>
            <person name="Ermolaeva M.D."/>
            <person name="White O."/>
            <person name="Salzberg S.L."/>
            <person name="Venter J.C."/>
            <person name="Shapiro L."/>
            <person name="Fraser C.M."/>
        </authorList>
    </citation>
    <scope>NUCLEOTIDE SEQUENCE [LARGE SCALE GENOMIC DNA]</scope>
    <source>
        <strain>ATCC 19089 / CIP 103742 / CB 15</strain>
    </source>
</reference>
<sequence>MTPTAPSPLVWRDDGLPQSSLYGDVYFSSVDGLAETRAVFLAGCGLPERFAERRDFVVGELGFGSGLNIAALLDLWRREKPPGGRLHIFSIEAHPLSRDEAARILAHWPELGEAAQVLLDHWPGRARGFHRVDLPGFDAVLDLAVMDVVEALEAWDGLADAWFLDGFSPALNPAMWRDEVLAAVGARSAPGARAATFTVAGAVRRGLSAAGFEIAKRPGFGRKRERLEAWRPGVRPVAQRPETLAIIGGGIAGAALARAARAAGLEVTVIDDADAVAASGNPAALVTPALDAGGGPRAALYAQALSRAVTLYEAQPDAVLAREVLQLAAGERDPARFATVADQDLFEPGDMRTLEAEDTRARLETPTPALAMAGARVIAPAEVTAAWAGPVVRRRVAKAERDGEGWRLLDAAGEIIARADRLALAGGAAGADLLAEAPLRPVRGQASWTRGHGAPATAFGGYAIPTREGLLFGATHDRDDTQTNVRSEDHARNLATLAKGLPALAARLAGSTFEGRAAIRATTPDRLPLADLREDGVIVLTGLGSRGFCLAPLLAEHLVARLLDVPSPLPRQLSHLLKLTRFDSPVTRSRL</sequence>
<evidence type="ECO:0000255" key="1">
    <source>
        <dbReference type="HAMAP-Rule" id="MF_01102"/>
    </source>
</evidence>
<evidence type="ECO:0000305" key="2"/>
<protein>
    <recommendedName>
        <fullName evidence="1">tRNA 5-methylaminomethyl-2-thiouridine biosynthesis bifunctional protein MnmC</fullName>
        <shortName evidence="1">tRNA mnm(5)s(2)U biosynthesis bifunctional protein</shortName>
    </recommendedName>
    <domain>
        <recommendedName>
            <fullName evidence="1">tRNA (mnm(5)s(2)U34)-methyltransferase</fullName>
            <ecNumber evidence="1">2.1.1.61</ecNumber>
        </recommendedName>
    </domain>
    <domain>
        <recommendedName>
            <fullName evidence="1">FAD-dependent cmnm(5)s(2)U34 oxidoreductase</fullName>
            <ecNumber evidence="1">1.5.-.-</ecNumber>
        </recommendedName>
    </domain>
</protein>
<organism>
    <name type="scientific">Caulobacter vibrioides (strain ATCC 19089 / CIP 103742 / CB 15)</name>
    <name type="common">Caulobacter crescentus</name>
    <dbReference type="NCBI Taxonomy" id="190650"/>
    <lineage>
        <taxon>Bacteria</taxon>
        <taxon>Pseudomonadati</taxon>
        <taxon>Pseudomonadota</taxon>
        <taxon>Alphaproteobacteria</taxon>
        <taxon>Caulobacterales</taxon>
        <taxon>Caulobacteraceae</taxon>
        <taxon>Caulobacter</taxon>
    </lineage>
</organism>
<comment type="function">
    <text evidence="1">Catalyzes the last two steps in the biosynthesis of 5-methylaminomethyl-2-thiouridine (mnm(5)s(2)U) at the wobble position (U34) in tRNA. Catalyzes the FAD-dependent demodification of cmnm(5)s(2)U34 to nm(5)s(2)U34, followed by the transfer of a methyl group from S-adenosyl-L-methionine to nm(5)s(2)U34, to form mnm(5)s(2)U34.</text>
</comment>
<comment type="catalytic activity">
    <reaction evidence="1">
        <text>5-aminomethyl-2-thiouridine(34) in tRNA + S-adenosyl-L-methionine = 5-methylaminomethyl-2-thiouridine(34) in tRNA + S-adenosyl-L-homocysteine + H(+)</text>
        <dbReference type="Rhea" id="RHEA:19569"/>
        <dbReference type="Rhea" id="RHEA-COMP:10195"/>
        <dbReference type="Rhea" id="RHEA-COMP:10197"/>
        <dbReference type="ChEBI" id="CHEBI:15378"/>
        <dbReference type="ChEBI" id="CHEBI:57856"/>
        <dbReference type="ChEBI" id="CHEBI:59789"/>
        <dbReference type="ChEBI" id="CHEBI:74454"/>
        <dbReference type="ChEBI" id="CHEBI:74455"/>
        <dbReference type="EC" id="2.1.1.61"/>
    </reaction>
</comment>
<comment type="cofactor">
    <cofactor evidence="1">
        <name>FAD</name>
        <dbReference type="ChEBI" id="CHEBI:57692"/>
    </cofactor>
</comment>
<comment type="subcellular location">
    <subcellularLocation>
        <location evidence="1">Cytoplasm</location>
    </subcellularLocation>
</comment>
<comment type="similarity">
    <text evidence="1">In the N-terminal section; belongs to the methyltransferase superfamily. tRNA (mnm(5)s(2)U34)-methyltransferase family.</text>
</comment>
<comment type="similarity">
    <text evidence="1">In the C-terminal section; belongs to the DAO family.</text>
</comment>
<comment type="sequence caution" evidence="2">
    <conflict type="erroneous initiation">
        <sequence resource="EMBL-CDS" id="AAK22733"/>
    </conflict>
</comment>
<name>MNMC_CAUVC</name>
<gene>
    <name evidence="1" type="primary">mnmC</name>
    <name type="ordered locus">CC_0748</name>
</gene>
<accession>Q9AA58</accession>